<reference key="1">
    <citation type="journal article" date="2009" name="Genome Biol.">
        <title>A whole-genome assembly of the domestic cow, Bos taurus.</title>
        <authorList>
            <person name="Zimin A.V."/>
            <person name="Delcher A.L."/>
            <person name="Florea L."/>
            <person name="Kelley D.R."/>
            <person name="Schatz M.C."/>
            <person name="Puiu D."/>
            <person name="Hanrahan F."/>
            <person name="Pertea G."/>
            <person name="Van Tassell C.P."/>
            <person name="Sonstegard T.S."/>
            <person name="Marcais G."/>
            <person name="Roberts M."/>
            <person name="Subramanian P."/>
            <person name="Yorke J.A."/>
            <person name="Salzberg S.L."/>
        </authorList>
    </citation>
    <scope>NUCLEOTIDE SEQUENCE [LARGE SCALE GENOMIC DNA]</scope>
    <source>
        <strain>Hereford</strain>
    </source>
</reference>
<reference evidence="10" key="2">
    <citation type="journal article" date="1987" name="FEBS Lett.">
        <title>Collagen type IX: evidence for covalent linkages to type II collagen in cartilage.</title>
        <authorList>
            <person name="Eyre D.R."/>
            <person name="Apon S."/>
            <person name="Wu J.J."/>
            <person name="Ericsson L.H."/>
            <person name="Walsh K.A."/>
        </authorList>
    </citation>
    <scope>PROTEIN SEQUENCE OF 171-182</scope>
    <scope>CROSS-LINKS</scope>
</reference>
<reference evidence="10" key="3">
    <citation type="journal article" date="1992" name="J. Biol. Chem.">
        <title>Identification of cross-linking sites in bovine cartilage type IX collagen reveals an antiparallel type II-type IX molecular relationship and type IX to type IX bonding.</title>
        <authorList>
            <person name="Wu J.J."/>
            <person name="Woods P.E."/>
            <person name="Eyre D.R."/>
        </authorList>
    </citation>
    <scope>PROTEIN SEQUENCE OF 171-195</scope>
    <scope>SUBUNIT</scope>
    <scope>CROSS-LINKS</scope>
    <scope>HYDROXYLATION AT LYS-182</scope>
</reference>
<reference evidence="10" key="4">
    <citation type="journal article" date="1989" name="Biochem. J.">
        <title>Bovine cartilage types VI and IX collagens. Characterization of their forms in vivo.</title>
        <authorList>
            <person name="Ayad S."/>
            <person name="Marriott A."/>
            <person name="Morgan K."/>
            <person name="Grant M.E."/>
        </authorList>
    </citation>
    <scope>SUBUNIT</scope>
</reference>
<reference evidence="10" key="5">
    <citation type="journal article" date="1992" name="Biochem. Biophys. Res. Commun.">
        <title>Extraction and characterisation of the intact form of bovine vitreous type IX collagen.</title>
        <authorList>
            <person name="Bishop P."/>
            <person name="McLeod D."/>
            <person name="Ayad S."/>
        </authorList>
    </citation>
    <scope>FUNCTION</scope>
</reference>
<reference evidence="10" key="6">
    <citation type="journal article" date="1993" name="J. Histochem. Cytochem.">
        <title>Composition and organization of the collagen network produced by fetal bovine chondrocytes cultured at high density.</title>
        <authorList>
            <person name="Ruggiero F."/>
            <person name="Petit B."/>
            <person name="Ronziere M.C."/>
            <person name="Farjanel J."/>
            <person name="Hartmann D.J."/>
            <person name="Herbage D."/>
        </authorList>
    </citation>
    <scope>FUNCTION</scope>
    <scope>SUBCELLULAR LOCATION</scope>
</reference>
<reference evidence="10" key="7">
    <citation type="journal article" date="1994" name="Biochem. J.">
        <title>Extraction and characterization of the tissue forms of collagen types II and IX from bovine vitreous.</title>
        <authorList>
            <person name="Bishop P.N."/>
            <person name="Crossman M.V."/>
            <person name="McLeod D."/>
            <person name="Ayad S."/>
        </authorList>
    </citation>
    <scope>FUNCTION</scope>
</reference>
<comment type="function">
    <text evidence="6 8 9">Structural component of hyaline cartilage and vitreous of the eye.</text>
</comment>
<comment type="subunit">
    <text evidence="11 12">Heterotrimer of an alpha 1(IX), an alpha 2(IX) and an alpha 3(IX) chain (Probable). The chains are linked to each other by interchain disulfide bonds (Probable). Trimers are also cross-linked via hydroxylysines (Probable).</text>
</comment>
<comment type="subcellular location">
    <subcellularLocation>
        <location evidence="9">Secreted</location>
        <location evidence="9">Extracellular space</location>
        <location evidence="9">Extracellular matrix</location>
    </subcellularLocation>
</comment>
<comment type="PTM">
    <text evidence="10">Prolines at the third position of the tripeptide repeating unit (G-X-Y) are hydroxylated in some or all of the chains.</text>
</comment>
<comment type="PTM">
    <text evidence="5 7">Covalently linked to the telopeptides of type II collagen by hydroxylysine-derived cross-links.</text>
</comment>
<comment type="similarity">
    <text evidence="10">Belongs to the fibril-associated collagens with interrupted helices (FACIT) family.</text>
</comment>
<proteinExistence type="evidence at protein level"/>
<feature type="signal peptide" evidence="3">
    <location>
        <begin position="1"/>
        <end position="22"/>
    </location>
</feature>
<feature type="chain" id="PRO_0000449249" description="Collagen alpha-2(IX) chain">
    <location>
        <begin position="23"/>
        <end position="688"/>
    </location>
</feature>
<feature type="region of interest" description="Disordered" evidence="4">
    <location>
        <begin position="26"/>
        <end position="520"/>
    </location>
</feature>
<feature type="region of interest" description="Triple-helical region 4 (COL4)" evidence="10">
    <location>
        <begin position="26"/>
        <end position="162"/>
    </location>
</feature>
<feature type="region of interest" description="Nonhelical region 4 (NC4)" evidence="10">
    <location>
        <begin position="163"/>
        <end position="179"/>
    </location>
</feature>
<feature type="region of interest" description="Triple-helical region 3 (COL3)" evidence="10">
    <location>
        <begin position="180"/>
        <end position="518"/>
    </location>
</feature>
<feature type="region of interest" description="Nonhelical region 3 (NC3)" evidence="10">
    <location>
        <begin position="519"/>
        <end position="548"/>
    </location>
</feature>
<feature type="region of interest" description="Triple-helical region 2 (COL2)" evidence="10">
    <location>
        <begin position="549"/>
        <end position="631"/>
    </location>
</feature>
<feature type="region of interest" description="Disordered" evidence="4">
    <location>
        <begin position="549"/>
        <end position="578"/>
    </location>
</feature>
<feature type="region of interest" description="Disordered" evidence="4">
    <location>
        <begin position="590"/>
        <end position="662"/>
    </location>
</feature>
<feature type="region of interest" description="Nonhelical region 2 (NC2)" evidence="10">
    <location>
        <begin position="632"/>
        <end position="633"/>
    </location>
</feature>
<feature type="region of interest" description="Triple-helical region 1 (COL1)" evidence="10">
    <location>
        <begin position="634"/>
        <end position="663"/>
    </location>
</feature>
<feature type="region of interest" description="Nonhelical region 1 (NC1)" evidence="10">
    <location>
        <begin position="664"/>
        <end position="688"/>
    </location>
</feature>
<feature type="compositionally biased region" description="Pro residues" evidence="4">
    <location>
        <begin position="30"/>
        <end position="42"/>
    </location>
</feature>
<feature type="compositionally biased region" description="Pro residues" evidence="4">
    <location>
        <begin position="105"/>
        <end position="126"/>
    </location>
</feature>
<feature type="compositionally biased region" description="Low complexity" evidence="4">
    <location>
        <begin position="128"/>
        <end position="138"/>
    </location>
</feature>
<feature type="compositionally biased region" description="Pro residues" evidence="4">
    <location>
        <begin position="143"/>
        <end position="156"/>
    </location>
</feature>
<feature type="compositionally biased region" description="Low complexity" evidence="4">
    <location>
        <begin position="251"/>
        <end position="265"/>
    </location>
</feature>
<feature type="compositionally biased region" description="Low complexity" evidence="4">
    <location>
        <begin position="394"/>
        <end position="412"/>
    </location>
</feature>
<feature type="compositionally biased region" description="Gly residues" evidence="4">
    <location>
        <begin position="435"/>
        <end position="444"/>
    </location>
</feature>
<feature type="compositionally biased region" description="Low complexity" evidence="4">
    <location>
        <begin position="497"/>
        <end position="506"/>
    </location>
</feature>
<feature type="compositionally biased region" description="Pro residues" evidence="4">
    <location>
        <begin position="556"/>
        <end position="565"/>
    </location>
</feature>
<feature type="compositionally biased region" description="Basic and acidic residues" evidence="4">
    <location>
        <begin position="598"/>
        <end position="610"/>
    </location>
</feature>
<feature type="compositionally biased region" description="Low complexity" evidence="4">
    <location>
        <begin position="641"/>
        <end position="651"/>
    </location>
</feature>
<feature type="modified residue" description="4-hydroxyproline" evidence="1">
    <location>
        <position position="159"/>
    </location>
</feature>
<feature type="modified residue" description="5-hydroxylysine" evidence="11">
    <location>
        <position position="182"/>
    </location>
</feature>
<feature type="glycosylation site" description="O-linked (Xyl...) (glycosaminoglycan) serine" evidence="1">
    <location>
        <position position="168"/>
    </location>
</feature>
<feature type="glycosylation site" description="O-linked (Gal...) hydroxylysine" evidence="1">
    <location>
        <position position="182"/>
    </location>
</feature>
<feature type="disulfide bond" description="Interchain" evidence="3">
    <location>
        <position position="173"/>
    </location>
</feature>
<feature type="disulfide bond" description="Interchain" evidence="3">
    <location>
        <position position="177"/>
    </location>
</feature>
<evidence type="ECO:0000250" key="1">
    <source>
        <dbReference type="UniProtKB" id="P12108"/>
    </source>
</evidence>
<evidence type="ECO:0000250" key="2">
    <source>
        <dbReference type="UniProtKB" id="Q14055"/>
    </source>
</evidence>
<evidence type="ECO:0000255" key="3"/>
<evidence type="ECO:0000256" key="4">
    <source>
        <dbReference type="SAM" id="MobiDB-lite"/>
    </source>
</evidence>
<evidence type="ECO:0000269" key="5">
    <source>
    </source>
</evidence>
<evidence type="ECO:0000269" key="6">
    <source>
    </source>
</evidence>
<evidence type="ECO:0000269" key="7">
    <source>
    </source>
</evidence>
<evidence type="ECO:0000269" key="8">
    <source>
    </source>
</evidence>
<evidence type="ECO:0000269" key="9">
    <source>
    </source>
</evidence>
<evidence type="ECO:0000305" key="10"/>
<evidence type="ECO:0000305" key="11">
    <source>
    </source>
</evidence>
<evidence type="ECO:0000305" key="12">
    <source>
    </source>
</evidence>
<accession>C0HLN2</accession>
<name>CO9A2_BOVIN</name>
<dbReference type="EMBL" id="CM008170">
    <property type="status" value="NOT_ANNOTATED_CDS"/>
    <property type="molecule type" value="Genomic_DNA"/>
</dbReference>
<dbReference type="RefSeq" id="XP_024845989.1">
    <property type="nucleotide sequence ID" value="XM_024990221.2"/>
</dbReference>
<dbReference type="ComplexPortal" id="CPX-4105">
    <property type="entry name" value="Collagen type IX trimer"/>
</dbReference>
<dbReference type="FunCoup" id="C0HLN2">
    <property type="interactions" value="8"/>
</dbReference>
<dbReference type="GlyCosmos" id="C0HLN2">
    <property type="glycosylation" value="2 sites, No reported glycans"/>
</dbReference>
<dbReference type="GlyGen" id="C0HLN2">
    <property type="glycosylation" value="2 sites"/>
</dbReference>
<dbReference type="PaxDb" id="9913-ENSBTAP00000027483"/>
<dbReference type="Ensembl" id="ENSBTAT00000133512.1">
    <property type="protein sequence ID" value="ENSBTAP00000089645.1"/>
    <property type="gene ID" value="ENSBTAG00000020622.7"/>
</dbReference>
<dbReference type="GeneID" id="505942"/>
<dbReference type="VGNC" id="VGNC:27576">
    <property type="gene designation" value="COL9A2"/>
</dbReference>
<dbReference type="GeneTree" id="ENSGT00940000161290"/>
<dbReference type="InParanoid" id="C0HLN2"/>
<dbReference type="OrthoDB" id="8956848at2759"/>
<dbReference type="Proteomes" id="UP000009136">
    <property type="component" value="Chromosome 3"/>
</dbReference>
<dbReference type="GO" id="GO:0005594">
    <property type="term" value="C:collagen type IX trimer"/>
    <property type="evidence" value="ECO:0007669"/>
    <property type="project" value="Ensembl"/>
</dbReference>
<dbReference type="GO" id="GO:0062023">
    <property type="term" value="C:collagen-containing extracellular matrix"/>
    <property type="evidence" value="ECO:0000318"/>
    <property type="project" value="GO_Central"/>
</dbReference>
<dbReference type="GO" id="GO:0005615">
    <property type="term" value="C:extracellular space"/>
    <property type="evidence" value="ECO:0000318"/>
    <property type="project" value="GO_Central"/>
</dbReference>
<dbReference type="GO" id="GO:0030020">
    <property type="term" value="F:extracellular matrix structural constituent conferring tensile strength"/>
    <property type="evidence" value="ECO:0000318"/>
    <property type="project" value="GO_Central"/>
</dbReference>
<dbReference type="GO" id="GO:0042803">
    <property type="term" value="F:protein homodimerization activity"/>
    <property type="evidence" value="ECO:0007669"/>
    <property type="project" value="Ensembl"/>
</dbReference>
<dbReference type="Gene3D" id="1.20.5.320">
    <property type="entry name" value="6-Phosphogluconate Dehydrogenase, domain 3"/>
    <property type="match status" value="1"/>
</dbReference>
<dbReference type="InterPro" id="IPR008160">
    <property type="entry name" value="Collagen"/>
</dbReference>
<dbReference type="InterPro" id="IPR050149">
    <property type="entry name" value="Collagen_superfamily"/>
</dbReference>
<dbReference type="PANTHER" id="PTHR24023">
    <property type="entry name" value="COLLAGEN ALPHA"/>
    <property type="match status" value="1"/>
</dbReference>
<dbReference type="PANTHER" id="PTHR24023:SF906">
    <property type="entry name" value="COLLAGEN ALPHA-2(IX) CHAIN"/>
    <property type="match status" value="1"/>
</dbReference>
<dbReference type="Pfam" id="PF01391">
    <property type="entry name" value="Collagen"/>
    <property type="match status" value="7"/>
</dbReference>
<gene>
    <name evidence="2" type="primary">COL9A2</name>
</gene>
<organism>
    <name type="scientific">Bos taurus</name>
    <name type="common">Bovine</name>
    <dbReference type="NCBI Taxonomy" id="9913"/>
    <lineage>
        <taxon>Eukaryota</taxon>
        <taxon>Metazoa</taxon>
        <taxon>Chordata</taxon>
        <taxon>Craniata</taxon>
        <taxon>Vertebrata</taxon>
        <taxon>Euteleostomi</taxon>
        <taxon>Mammalia</taxon>
        <taxon>Eutheria</taxon>
        <taxon>Laurasiatheria</taxon>
        <taxon>Artiodactyla</taxon>
        <taxon>Ruminantia</taxon>
        <taxon>Pecora</taxon>
        <taxon>Bovidae</taxon>
        <taxon>Bovinae</taxon>
        <taxon>Bos</taxon>
    </lineage>
</organism>
<sequence>MAPAADPRSLLVLLQVLGLALAQIRGLPGEPGPPGPPGPPGVPGSDGIDGDKGPPGKAGPPGPKGEPGKAGTDGPDGKPGIDGLTGAKGEPGPAGIPGVKGQPGLPGPPGLPGPGFAGPPGPPGPVGLPGEIGLTGPKGDPGPEGPSGPPGPPGKPGRPGTIQGLEGSADFLCPTNCPAGVKGPPGLQGVKGHPGRRGLLGDSGRQGKPGPKGDVGASGEQGIPGPPGPQGVRGYPGMAGPKGETGPQGYKGMVGSVGAAGSPGEEGPRGPPGRAGEKGDVGSQGVRGPQGITGPKGATGPPGIDGKDGTPGTPGVKGSAGQAGRPGNPGHQGLAGVPGMPGTKGGPGDKGEPGRQGFPGVSGPPGKEGEPGPRGEIGPQGIMGQKGDHGERGPVGQPGPQGRQGPKGEQGPPGIPGPQGLPGIKGDKGSPGKTGPRGGVGDPGVAGLPGEKGEKGESGEPGPKGQQGVRGEPGYPGPSGDAGAPGVQGYPGPPGPRGLVGDRGLPGQPGRQGVAGRDASDQHIEDVVLKMLQEQLAEMAVSAKREALGATGMMGPPGPPGPPGYPGKQGPHGHPGPRGVPGIVGAVGQIGNTGPKGKRGEKGDQGEVGRGHPGMPGPPGIPGLPGRPGQAINGKDGDRGAPGAPGEAGRPGLPGPIGLPGFCEPAACLGASAYASGRLTEPGSIKGP</sequence>
<protein>
    <recommendedName>
        <fullName evidence="2">Collagen alpha-2(IX) chain</fullName>
    </recommendedName>
    <alternativeName>
        <fullName evidence="10">Collagen type IX alpha 2 chain</fullName>
    </alternativeName>
</protein>
<keyword id="KW-0176">Collagen</keyword>
<keyword id="KW-0903">Direct protein sequencing</keyword>
<keyword id="KW-1015">Disulfide bond</keyword>
<keyword id="KW-0272">Extracellular matrix</keyword>
<keyword id="KW-0325">Glycoprotein</keyword>
<keyword id="KW-0379">Hydroxylation</keyword>
<keyword id="KW-0654">Proteoglycan</keyword>
<keyword id="KW-1185">Reference proteome</keyword>
<keyword id="KW-0677">Repeat</keyword>
<keyword id="KW-0964">Secreted</keyword>
<keyword id="KW-0732">Signal</keyword>